<name>RS16_CYTH3</name>
<reference key="1">
    <citation type="journal article" date="2007" name="Appl. Environ. Microbiol.">
        <title>Genome sequence of the cellulolytic gliding bacterium Cytophaga hutchinsonii.</title>
        <authorList>
            <person name="Xie G."/>
            <person name="Bruce D.C."/>
            <person name="Challacombe J.F."/>
            <person name="Chertkov O."/>
            <person name="Detter J.C."/>
            <person name="Gilna P."/>
            <person name="Han C.S."/>
            <person name="Lucas S."/>
            <person name="Misra M."/>
            <person name="Myers G.L."/>
            <person name="Richardson P."/>
            <person name="Tapia R."/>
            <person name="Thayer N."/>
            <person name="Thompson L.S."/>
            <person name="Brettin T.S."/>
            <person name="Henrissat B."/>
            <person name="Wilson D.B."/>
            <person name="McBride M.J."/>
        </authorList>
    </citation>
    <scope>NUCLEOTIDE SEQUENCE [LARGE SCALE GENOMIC DNA]</scope>
    <source>
        <strain>ATCC 33406 / DSM 1761 / JCM 20678 / CIP 103989 / IAM 12607 / NBRC 15051 / NCIMB 9469 / D465</strain>
    </source>
</reference>
<dbReference type="EMBL" id="CP000383">
    <property type="protein sequence ID" value="ABG57410.1"/>
    <property type="molecule type" value="Genomic_DNA"/>
</dbReference>
<dbReference type="RefSeq" id="WP_011583526.1">
    <property type="nucleotide sequence ID" value="NC_008255.1"/>
</dbReference>
<dbReference type="SMR" id="Q11YV6"/>
<dbReference type="STRING" id="269798.CHU_0117"/>
<dbReference type="KEGG" id="chu:CHU_0117"/>
<dbReference type="eggNOG" id="COG0228">
    <property type="taxonomic scope" value="Bacteria"/>
</dbReference>
<dbReference type="HOGENOM" id="CLU_100590_0_0_10"/>
<dbReference type="OrthoDB" id="9807878at2"/>
<dbReference type="Proteomes" id="UP000001822">
    <property type="component" value="Chromosome"/>
</dbReference>
<dbReference type="GO" id="GO:0005737">
    <property type="term" value="C:cytoplasm"/>
    <property type="evidence" value="ECO:0007669"/>
    <property type="project" value="UniProtKB-ARBA"/>
</dbReference>
<dbReference type="GO" id="GO:0015935">
    <property type="term" value="C:small ribosomal subunit"/>
    <property type="evidence" value="ECO:0007669"/>
    <property type="project" value="TreeGrafter"/>
</dbReference>
<dbReference type="GO" id="GO:0003735">
    <property type="term" value="F:structural constituent of ribosome"/>
    <property type="evidence" value="ECO:0007669"/>
    <property type="project" value="InterPro"/>
</dbReference>
<dbReference type="GO" id="GO:0006412">
    <property type="term" value="P:translation"/>
    <property type="evidence" value="ECO:0007669"/>
    <property type="project" value="UniProtKB-UniRule"/>
</dbReference>
<dbReference type="Gene3D" id="3.30.1320.10">
    <property type="match status" value="1"/>
</dbReference>
<dbReference type="HAMAP" id="MF_00385">
    <property type="entry name" value="Ribosomal_bS16"/>
    <property type="match status" value="1"/>
</dbReference>
<dbReference type="InterPro" id="IPR000307">
    <property type="entry name" value="Ribosomal_bS16"/>
</dbReference>
<dbReference type="InterPro" id="IPR023803">
    <property type="entry name" value="Ribosomal_bS16_dom_sf"/>
</dbReference>
<dbReference type="NCBIfam" id="NF011094">
    <property type="entry name" value="PRK14521.1"/>
    <property type="match status" value="1"/>
</dbReference>
<dbReference type="NCBIfam" id="TIGR00002">
    <property type="entry name" value="S16"/>
    <property type="match status" value="1"/>
</dbReference>
<dbReference type="PANTHER" id="PTHR12919">
    <property type="entry name" value="30S RIBOSOMAL PROTEIN S16"/>
    <property type="match status" value="1"/>
</dbReference>
<dbReference type="PANTHER" id="PTHR12919:SF20">
    <property type="entry name" value="SMALL RIBOSOMAL SUBUNIT PROTEIN BS16M"/>
    <property type="match status" value="1"/>
</dbReference>
<dbReference type="Pfam" id="PF00886">
    <property type="entry name" value="Ribosomal_S16"/>
    <property type="match status" value="1"/>
</dbReference>
<dbReference type="SUPFAM" id="SSF54565">
    <property type="entry name" value="Ribosomal protein S16"/>
    <property type="match status" value="1"/>
</dbReference>
<gene>
    <name evidence="1" type="primary">rpsP</name>
    <name type="ordered locus">CHU_0117</name>
</gene>
<comment type="similarity">
    <text evidence="1">Belongs to the bacterial ribosomal protein bS16 family.</text>
</comment>
<accession>Q11YV6</accession>
<protein>
    <recommendedName>
        <fullName evidence="1">Small ribosomal subunit protein bS16</fullName>
    </recommendedName>
    <alternativeName>
        <fullName evidence="2">30S ribosomal protein S16</fullName>
    </alternativeName>
</protein>
<feature type="chain" id="PRO_1000049249" description="Small ribosomal subunit protein bS16">
    <location>
        <begin position="1"/>
        <end position="175"/>
    </location>
</feature>
<proteinExistence type="inferred from homology"/>
<organism>
    <name type="scientific">Cytophaga hutchinsonii (strain ATCC 33406 / DSM 1761 / CIP 103989 / NBRC 15051 / NCIMB 9469 / D465)</name>
    <dbReference type="NCBI Taxonomy" id="269798"/>
    <lineage>
        <taxon>Bacteria</taxon>
        <taxon>Pseudomonadati</taxon>
        <taxon>Bacteroidota</taxon>
        <taxon>Cytophagia</taxon>
        <taxon>Cytophagales</taxon>
        <taxon>Cytophagaceae</taxon>
        <taxon>Cytophaga</taxon>
    </lineage>
</organism>
<sequence length="175" mass="19071">MAVRIRLSKRGRRKLALYDIVVSDSRSPRDGKFIQKLGTYNPNTNPATVVLNDELTFDWVMKGALPTDTARTILSERGVMLKKHLQVGVDKGAITQEVADQKFSAWVSNKEASKTSNANALVSKKEADRKARLAAEVKIKEAKAEQVRAKKIVAENPVAAADLAEATDAPAEAAE</sequence>
<keyword id="KW-1185">Reference proteome</keyword>
<keyword id="KW-0687">Ribonucleoprotein</keyword>
<keyword id="KW-0689">Ribosomal protein</keyword>
<evidence type="ECO:0000255" key="1">
    <source>
        <dbReference type="HAMAP-Rule" id="MF_00385"/>
    </source>
</evidence>
<evidence type="ECO:0000305" key="2"/>